<reference key="1">
    <citation type="journal article" date="2008" name="Genome Res.">
        <title>Comparative genome analysis of Salmonella enteritidis PT4 and Salmonella gallinarum 287/91 provides insights into evolutionary and host adaptation pathways.</title>
        <authorList>
            <person name="Thomson N.R."/>
            <person name="Clayton D.J."/>
            <person name="Windhorst D."/>
            <person name="Vernikos G."/>
            <person name="Davidson S."/>
            <person name="Churcher C."/>
            <person name="Quail M.A."/>
            <person name="Stevens M."/>
            <person name="Jones M.A."/>
            <person name="Watson M."/>
            <person name="Barron A."/>
            <person name="Layton A."/>
            <person name="Pickard D."/>
            <person name="Kingsley R.A."/>
            <person name="Bignell A."/>
            <person name="Clark L."/>
            <person name="Harris B."/>
            <person name="Ormond D."/>
            <person name="Abdellah Z."/>
            <person name="Brooks K."/>
            <person name="Cherevach I."/>
            <person name="Chillingworth T."/>
            <person name="Woodward J."/>
            <person name="Norberczak H."/>
            <person name="Lord A."/>
            <person name="Arrowsmith C."/>
            <person name="Jagels K."/>
            <person name="Moule S."/>
            <person name="Mungall K."/>
            <person name="Saunders M."/>
            <person name="Whitehead S."/>
            <person name="Chabalgoity J.A."/>
            <person name="Maskell D."/>
            <person name="Humphreys T."/>
            <person name="Roberts M."/>
            <person name="Barrow P.A."/>
            <person name="Dougan G."/>
            <person name="Parkhill J."/>
        </authorList>
    </citation>
    <scope>NUCLEOTIDE SEQUENCE [LARGE SCALE GENOMIC DNA]</scope>
    <source>
        <strain>287/91 / NCTC 13346</strain>
    </source>
</reference>
<comment type="function">
    <text evidence="1">Thiolesterase that catalyzes the hydrolysis of S-D-lactoyl-glutathione to form glutathione and D-lactic acid.</text>
</comment>
<comment type="catalytic activity">
    <reaction evidence="1">
        <text>an S-(2-hydroxyacyl)glutathione + H2O = a 2-hydroxy carboxylate + glutathione + H(+)</text>
        <dbReference type="Rhea" id="RHEA:21864"/>
        <dbReference type="ChEBI" id="CHEBI:15377"/>
        <dbReference type="ChEBI" id="CHEBI:15378"/>
        <dbReference type="ChEBI" id="CHEBI:57925"/>
        <dbReference type="ChEBI" id="CHEBI:58896"/>
        <dbReference type="ChEBI" id="CHEBI:71261"/>
        <dbReference type="EC" id="3.1.2.6"/>
    </reaction>
</comment>
<comment type="cofactor">
    <cofactor evidence="1">
        <name>Zn(2+)</name>
        <dbReference type="ChEBI" id="CHEBI:29105"/>
    </cofactor>
    <text evidence="1">Binds 2 Zn(2+) ions per subunit.</text>
</comment>
<comment type="pathway">
    <text evidence="1">Secondary metabolite metabolism; methylglyoxal degradation; (R)-lactate from methylglyoxal: step 2/2.</text>
</comment>
<comment type="subunit">
    <text evidence="1">Monomer.</text>
</comment>
<comment type="similarity">
    <text evidence="1">Belongs to the metallo-beta-lactamase superfamily. Glyoxalase II family.</text>
</comment>
<protein>
    <recommendedName>
        <fullName evidence="1">Hydroxyacylglutathione hydrolase</fullName>
        <ecNumber evidence="1">3.1.2.6</ecNumber>
    </recommendedName>
    <alternativeName>
        <fullName evidence="1">Glyoxalase II</fullName>
        <shortName evidence="1">Glx II</shortName>
    </alternativeName>
</protein>
<feature type="chain" id="PRO_1000144797" description="Hydroxyacylglutathione hydrolase">
    <location>
        <begin position="1"/>
        <end position="251"/>
    </location>
</feature>
<feature type="binding site" evidence="1">
    <location>
        <position position="53"/>
    </location>
    <ligand>
        <name>Zn(2+)</name>
        <dbReference type="ChEBI" id="CHEBI:29105"/>
        <label>1</label>
    </ligand>
</feature>
<feature type="binding site" evidence="1">
    <location>
        <position position="55"/>
    </location>
    <ligand>
        <name>Zn(2+)</name>
        <dbReference type="ChEBI" id="CHEBI:29105"/>
        <label>1</label>
    </ligand>
</feature>
<feature type="binding site" evidence="1">
    <location>
        <position position="57"/>
    </location>
    <ligand>
        <name>Zn(2+)</name>
        <dbReference type="ChEBI" id="CHEBI:29105"/>
        <label>2</label>
    </ligand>
</feature>
<feature type="binding site" evidence="1">
    <location>
        <position position="58"/>
    </location>
    <ligand>
        <name>Zn(2+)</name>
        <dbReference type="ChEBI" id="CHEBI:29105"/>
        <label>2</label>
    </ligand>
</feature>
<feature type="binding site" evidence="1">
    <location>
        <position position="110"/>
    </location>
    <ligand>
        <name>Zn(2+)</name>
        <dbReference type="ChEBI" id="CHEBI:29105"/>
        <label>1</label>
    </ligand>
</feature>
<feature type="binding site" evidence="1">
    <location>
        <position position="127"/>
    </location>
    <ligand>
        <name>Zn(2+)</name>
        <dbReference type="ChEBI" id="CHEBI:29105"/>
        <label>1</label>
    </ligand>
</feature>
<feature type="binding site" evidence="1">
    <location>
        <position position="127"/>
    </location>
    <ligand>
        <name>Zn(2+)</name>
        <dbReference type="ChEBI" id="CHEBI:29105"/>
        <label>2</label>
    </ligand>
</feature>
<feature type="binding site" evidence="1">
    <location>
        <position position="165"/>
    </location>
    <ligand>
        <name>Zn(2+)</name>
        <dbReference type="ChEBI" id="CHEBI:29105"/>
        <label>2</label>
    </ligand>
</feature>
<organism>
    <name type="scientific">Salmonella gallinarum (strain 287/91 / NCTC 13346)</name>
    <dbReference type="NCBI Taxonomy" id="550538"/>
    <lineage>
        <taxon>Bacteria</taxon>
        <taxon>Pseudomonadati</taxon>
        <taxon>Pseudomonadota</taxon>
        <taxon>Gammaproteobacteria</taxon>
        <taxon>Enterobacterales</taxon>
        <taxon>Enterobacteriaceae</taxon>
        <taxon>Salmonella</taxon>
    </lineage>
</organism>
<gene>
    <name evidence="1" type="primary">gloB</name>
    <name type="ordered locus">SG0259</name>
</gene>
<proteinExistence type="inferred from homology"/>
<accession>B5R5L1</accession>
<sequence length="251" mass="28614">MNLNSIPAFQDNYIWVLTNDEGRCVIVDPGEAAPVLKAIAEHKWMPEAIFLTHHHHDHVGGVKELLQHFPQMTVYGPAETKDKGATHLVGDGDTIRVLGEKFTLFATPGHTLGHVCYFSHPYLFCGDTLFSGGCGRLFEGTPSQMYQSLMKINSLPDDTLICCAHEYTLANIKFALSILPHDSFINEYYRKVKELRVKKQMTLPVILKNERKINLFLRTEDIDLINEINKETILQQPEARFAWLRSKKDTF</sequence>
<name>GLO2_SALG2</name>
<dbReference type="EC" id="3.1.2.6" evidence="1"/>
<dbReference type="EMBL" id="AM933173">
    <property type="protein sequence ID" value="CAR36166.1"/>
    <property type="molecule type" value="Genomic_DNA"/>
</dbReference>
<dbReference type="RefSeq" id="WP_001052768.1">
    <property type="nucleotide sequence ID" value="NC_011274.1"/>
</dbReference>
<dbReference type="SMR" id="B5R5L1"/>
<dbReference type="KEGG" id="seg:SG0259"/>
<dbReference type="HOGENOM" id="CLU_030571_4_1_6"/>
<dbReference type="UniPathway" id="UPA00619">
    <property type="reaction ID" value="UER00676"/>
</dbReference>
<dbReference type="Proteomes" id="UP000008321">
    <property type="component" value="Chromosome"/>
</dbReference>
<dbReference type="GO" id="GO:0004416">
    <property type="term" value="F:hydroxyacylglutathione hydrolase activity"/>
    <property type="evidence" value="ECO:0007669"/>
    <property type="project" value="UniProtKB-UniRule"/>
</dbReference>
<dbReference type="GO" id="GO:0046872">
    <property type="term" value="F:metal ion binding"/>
    <property type="evidence" value="ECO:0007669"/>
    <property type="project" value="UniProtKB-KW"/>
</dbReference>
<dbReference type="GO" id="GO:0019243">
    <property type="term" value="P:methylglyoxal catabolic process to D-lactate via S-lactoyl-glutathione"/>
    <property type="evidence" value="ECO:0007669"/>
    <property type="project" value="InterPro"/>
</dbReference>
<dbReference type="CDD" id="cd07723">
    <property type="entry name" value="hydroxyacylglutathione_hydrolase_MBL-fold"/>
    <property type="match status" value="1"/>
</dbReference>
<dbReference type="Gene3D" id="3.60.15.10">
    <property type="entry name" value="Ribonuclease Z/Hydroxyacylglutathione hydrolase-like"/>
    <property type="match status" value="1"/>
</dbReference>
<dbReference type="HAMAP" id="MF_01374">
    <property type="entry name" value="Glyoxalase_2"/>
    <property type="match status" value="1"/>
</dbReference>
<dbReference type="InterPro" id="IPR035680">
    <property type="entry name" value="Clx_II_MBL"/>
</dbReference>
<dbReference type="InterPro" id="IPR050110">
    <property type="entry name" value="Glyoxalase_II_hydrolase"/>
</dbReference>
<dbReference type="InterPro" id="IPR032282">
    <property type="entry name" value="HAGH_C"/>
</dbReference>
<dbReference type="InterPro" id="IPR017782">
    <property type="entry name" value="Hydroxyacylglutathione_Hdrlase"/>
</dbReference>
<dbReference type="InterPro" id="IPR001279">
    <property type="entry name" value="Metallo-B-lactamas"/>
</dbReference>
<dbReference type="InterPro" id="IPR036866">
    <property type="entry name" value="RibonucZ/Hydroxyglut_hydro"/>
</dbReference>
<dbReference type="NCBIfam" id="TIGR03413">
    <property type="entry name" value="GSH_gloB"/>
    <property type="match status" value="1"/>
</dbReference>
<dbReference type="NCBIfam" id="NF007597">
    <property type="entry name" value="PRK10241.1"/>
    <property type="match status" value="1"/>
</dbReference>
<dbReference type="PANTHER" id="PTHR43705">
    <property type="entry name" value="HYDROXYACYLGLUTATHIONE HYDROLASE"/>
    <property type="match status" value="1"/>
</dbReference>
<dbReference type="PANTHER" id="PTHR43705:SF1">
    <property type="entry name" value="HYDROXYACYLGLUTATHIONE HYDROLASE GLOB"/>
    <property type="match status" value="1"/>
</dbReference>
<dbReference type="Pfam" id="PF16123">
    <property type="entry name" value="HAGH_C"/>
    <property type="match status" value="1"/>
</dbReference>
<dbReference type="Pfam" id="PF00753">
    <property type="entry name" value="Lactamase_B"/>
    <property type="match status" value="1"/>
</dbReference>
<dbReference type="PIRSF" id="PIRSF005457">
    <property type="entry name" value="Glx"/>
    <property type="match status" value="1"/>
</dbReference>
<dbReference type="SMART" id="SM00849">
    <property type="entry name" value="Lactamase_B"/>
    <property type="match status" value="1"/>
</dbReference>
<dbReference type="SUPFAM" id="SSF56281">
    <property type="entry name" value="Metallo-hydrolase/oxidoreductase"/>
    <property type="match status" value="1"/>
</dbReference>
<keyword id="KW-0378">Hydrolase</keyword>
<keyword id="KW-0479">Metal-binding</keyword>
<keyword id="KW-0862">Zinc</keyword>
<evidence type="ECO:0000255" key="1">
    <source>
        <dbReference type="HAMAP-Rule" id="MF_01374"/>
    </source>
</evidence>